<reference key="1">
    <citation type="journal article" date="1999" name="Nature">
        <title>Sequence and analysis of chromosome 2 of the plant Arabidopsis thaliana.</title>
        <authorList>
            <person name="Lin X."/>
            <person name="Kaul S."/>
            <person name="Rounsley S.D."/>
            <person name="Shea T.P."/>
            <person name="Benito M.-I."/>
            <person name="Town C.D."/>
            <person name="Fujii C.Y."/>
            <person name="Mason T.M."/>
            <person name="Bowman C.L."/>
            <person name="Barnstead M.E."/>
            <person name="Feldblyum T.V."/>
            <person name="Buell C.R."/>
            <person name="Ketchum K.A."/>
            <person name="Lee J.J."/>
            <person name="Ronning C.M."/>
            <person name="Koo H.L."/>
            <person name="Moffat K.S."/>
            <person name="Cronin L.A."/>
            <person name="Shen M."/>
            <person name="Pai G."/>
            <person name="Van Aken S."/>
            <person name="Umayam L."/>
            <person name="Tallon L.J."/>
            <person name="Gill J.E."/>
            <person name="Adams M.D."/>
            <person name="Carrera A.J."/>
            <person name="Creasy T.H."/>
            <person name="Goodman H.M."/>
            <person name="Somerville C.R."/>
            <person name="Copenhaver G.P."/>
            <person name="Preuss D."/>
            <person name="Nierman W.C."/>
            <person name="White O."/>
            <person name="Eisen J.A."/>
            <person name="Salzberg S.L."/>
            <person name="Fraser C.M."/>
            <person name="Venter J.C."/>
        </authorList>
    </citation>
    <scope>NUCLEOTIDE SEQUENCE [LARGE SCALE GENOMIC DNA]</scope>
    <source>
        <strain>cv. Columbia</strain>
    </source>
</reference>
<reference key="2">
    <citation type="journal article" date="2017" name="Plant J.">
        <title>Araport11: a complete reannotation of the Arabidopsis thaliana reference genome.</title>
        <authorList>
            <person name="Cheng C.Y."/>
            <person name="Krishnakumar V."/>
            <person name="Chan A.P."/>
            <person name="Thibaud-Nissen F."/>
            <person name="Schobel S."/>
            <person name="Town C.D."/>
        </authorList>
    </citation>
    <scope>GENOME REANNOTATION</scope>
    <source>
        <strain>cv. Columbia</strain>
    </source>
</reference>
<reference key="3">
    <citation type="journal article" date="2003" name="Science">
        <title>Empirical analysis of transcriptional activity in the Arabidopsis genome.</title>
        <authorList>
            <person name="Yamada K."/>
            <person name="Lim J."/>
            <person name="Dale J.M."/>
            <person name="Chen H."/>
            <person name="Shinn P."/>
            <person name="Palm C.J."/>
            <person name="Southwick A.M."/>
            <person name="Wu H.C."/>
            <person name="Kim C.J."/>
            <person name="Nguyen M."/>
            <person name="Pham P.K."/>
            <person name="Cheuk R.F."/>
            <person name="Karlin-Newmann G."/>
            <person name="Liu S.X."/>
            <person name="Lam B."/>
            <person name="Sakano H."/>
            <person name="Wu T."/>
            <person name="Yu G."/>
            <person name="Miranda M."/>
            <person name="Quach H.L."/>
            <person name="Tripp M."/>
            <person name="Chang C.H."/>
            <person name="Lee J.M."/>
            <person name="Toriumi M.J."/>
            <person name="Chan M.M."/>
            <person name="Tang C.C."/>
            <person name="Onodera C.S."/>
            <person name="Deng J.M."/>
            <person name="Akiyama K."/>
            <person name="Ansari Y."/>
            <person name="Arakawa T."/>
            <person name="Banh J."/>
            <person name="Banno F."/>
            <person name="Bowser L."/>
            <person name="Brooks S.Y."/>
            <person name="Carninci P."/>
            <person name="Chao Q."/>
            <person name="Choy N."/>
            <person name="Enju A."/>
            <person name="Goldsmith A.D."/>
            <person name="Gurjal M."/>
            <person name="Hansen N.F."/>
            <person name="Hayashizaki Y."/>
            <person name="Johnson-Hopson C."/>
            <person name="Hsuan V.W."/>
            <person name="Iida K."/>
            <person name="Karnes M."/>
            <person name="Khan S."/>
            <person name="Koesema E."/>
            <person name="Ishida J."/>
            <person name="Jiang P.X."/>
            <person name="Jones T."/>
            <person name="Kawai J."/>
            <person name="Kamiya A."/>
            <person name="Meyers C."/>
            <person name="Nakajima M."/>
            <person name="Narusaka M."/>
            <person name="Seki M."/>
            <person name="Sakurai T."/>
            <person name="Satou M."/>
            <person name="Tamse R."/>
            <person name="Vaysberg M."/>
            <person name="Wallender E.K."/>
            <person name="Wong C."/>
            <person name="Yamamura Y."/>
            <person name="Yuan S."/>
            <person name="Shinozaki K."/>
            <person name="Davis R.W."/>
            <person name="Theologis A."/>
            <person name="Ecker J.R."/>
        </authorList>
    </citation>
    <scope>NUCLEOTIDE SEQUENCE [LARGE SCALE MRNA]</scope>
    <source>
        <strain>cv. Columbia</strain>
    </source>
</reference>
<reference key="4">
    <citation type="journal article" date="2006" name="Plant J.">
        <title>An Arabidopsis chloroplast-targeted Hsp101 homologue, APG6, has an essential role in chloroplast development as well as heat-stress response.</title>
        <authorList>
            <person name="Myouga F."/>
            <person name="Motohashi R."/>
            <person name="Kuromori T."/>
            <person name="Nagata N."/>
            <person name="Shinozaki K."/>
        </authorList>
    </citation>
    <scope>INDUCTION BY HEAT STRESS</scope>
</reference>
<reference key="5">
    <citation type="journal article" date="2007" name="Plant J.">
        <title>The Arabidopsis ClpB/Hsp100 family of proteins: chaperones for stress and chloroplast development.</title>
        <authorList>
            <person name="Lee U."/>
            <person name="Rioflorido I."/>
            <person name="Hong S.W."/>
            <person name="Larkindale J."/>
            <person name="Waters E.R."/>
            <person name="Vierling E."/>
        </authorList>
    </citation>
    <scope>FUNCTION</scope>
    <scope>SUBCELLULAR LOCATION</scope>
    <scope>INDUCTION BY HEAT STRESS</scope>
    <scope>DISRUPTION PHENOTYPE</scope>
</reference>
<accession>Q8VYJ7</accession>
<keyword id="KW-0067">ATP-binding</keyword>
<keyword id="KW-0143">Chaperone</keyword>
<keyword id="KW-0496">Mitochondrion</keyword>
<keyword id="KW-0547">Nucleotide-binding</keyword>
<keyword id="KW-1185">Reference proteome</keyword>
<keyword id="KW-0677">Repeat</keyword>
<keyword id="KW-0809">Transit peptide</keyword>
<proteinExistence type="evidence at transcript level"/>
<evidence type="ECO:0000250" key="1"/>
<evidence type="ECO:0000255" key="2"/>
<evidence type="ECO:0000255" key="3">
    <source>
        <dbReference type="PROSITE-ProRule" id="PRU01251"/>
    </source>
</evidence>
<evidence type="ECO:0000269" key="4">
    <source>
    </source>
</evidence>
<evidence type="ECO:0000269" key="5">
    <source>
    </source>
</evidence>
<evidence type="ECO:0000305" key="6"/>
<comment type="function">
    <text evidence="5">Molecular chaperone that does not seem to be involved in heat stress response or tolerance.</text>
</comment>
<comment type="subcellular location">
    <subcellularLocation>
        <location evidence="5">Mitochondrion</location>
    </subcellularLocation>
</comment>
<comment type="induction">
    <text evidence="4 5">By heat stress.</text>
</comment>
<comment type="disruption phenotype">
    <text evidence="5">No visible phenotype under normal growth conditions.</text>
</comment>
<comment type="similarity">
    <text evidence="6">Belongs to the ClpA/ClpB family.</text>
</comment>
<sequence>MALRRLSKSVSSAIKAQYTLSRPSPLLRSRSLSSSPHYTSIGRPTNSFIGKINNSSITHATTTHGQLFPLSSPRRFCTTTAQVNQNEFTEMAWEGLINAFDAARESKQQIVESEHLMKALLEQKDGMARKIFTKAGIDNSSVLQATDLFISKQPTVSDASGQRLGSSLSVILENAKRHKKDMLDSYVSVEHFLLAYYSDTRFGQEFFRDMKLDIQVLKDAIKDVRGDQRVTDRNPESKYQALEKYGNDLTEMARRGKLDPVIGRDDEIRRCIQILCRRTKNNPVIIGEPGVGKTAIAEGLAQRIVRGDVPEPLMNRKLISLDMGSLLAGAKFRGDFEERLKAVMKEVSASNGQTILFIDEIHTVVGAGAMDGAMDASNLLKPMLGRGELRCIGATTLTEYRKYIEKDPALERRFQQVLCVQPSVEDTISILRGLRERYELHHGVTISDSALVSAAVLADRYITERFLPDKAIDLVDEAGAKLKMEITSKPTELDGIDRAVIKLEMEKLSLKNDTDKASKERLQKIENDLSTLKQKQKELNVQWEKEKSLMTKIRSFKEEIDRVNLEIESAEREYDLNRAAELKYGTLLSLQRQLEEAEKNLTNFRQFGQSLLREVVTDLDIAEIVSKWTGIPLSNLQQSEREKLVMLEEVLHHRVIGQDMAVKSVADAIRRSRAGLSDPNRPIASFMFMGPTGVGKTELAKALAGYLFNTENAIVRVDMSEYMEKHSVSRLVGAPPGYVGYEEGGQLTEVVRRRPYSVVLFDEIEKAHPDVFNILLQLLDDGRITDSQGRTVSFKNCVVIMTSNIGSHHILETLRNNEDSKEAVYEIMKRQVVELARQNFRPEFMNRIDEYIVFQPLDSNEISKIVELQMRRVKNSLEQKKIKLQYTKEAVDLLAQLGFDPNYGARPVKRVIQQMVENEIAVGILKGDFAEEDTVLVDVDHLASDNKLVIKKLESNASAEEMAA</sequence>
<dbReference type="EMBL" id="CP002685">
    <property type="protein sequence ID" value="AEC07662.1"/>
    <property type="molecule type" value="Genomic_DNA"/>
</dbReference>
<dbReference type="EMBL" id="AY070722">
    <property type="protein sequence ID" value="AAL50064.1"/>
    <property type="molecule type" value="mRNA"/>
</dbReference>
<dbReference type="EMBL" id="BT002223">
    <property type="protein sequence ID" value="AAN72234.1"/>
    <property type="molecule type" value="mRNA"/>
</dbReference>
<dbReference type="PIR" id="G84644">
    <property type="entry name" value="G84644"/>
</dbReference>
<dbReference type="RefSeq" id="NP_565586.1">
    <property type="nucleotide sequence ID" value="NM_128071.3"/>
</dbReference>
<dbReference type="SMR" id="Q8VYJ7"/>
<dbReference type="BioGRID" id="2404">
    <property type="interactions" value="6"/>
</dbReference>
<dbReference type="FunCoup" id="Q8VYJ7">
    <property type="interactions" value="557"/>
</dbReference>
<dbReference type="IntAct" id="Q8VYJ7">
    <property type="interactions" value="1"/>
</dbReference>
<dbReference type="STRING" id="3702.Q8VYJ7"/>
<dbReference type="iPTMnet" id="Q8VYJ7"/>
<dbReference type="SwissPalm" id="Q8VYJ7"/>
<dbReference type="PaxDb" id="3702-AT2G25140.1"/>
<dbReference type="ProteomicsDB" id="246654"/>
<dbReference type="EnsemblPlants" id="AT2G25140.1">
    <property type="protein sequence ID" value="AT2G25140.1"/>
    <property type="gene ID" value="AT2G25140"/>
</dbReference>
<dbReference type="GeneID" id="817052"/>
<dbReference type="Gramene" id="AT2G25140.1">
    <property type="protein sequence ID" value="AT2G25140.1"/>
    <property type="gene ID" value="AT2G25140"/>
</dbReference>
<dbReference type="KEGG" id="ath:AT2G25140"/>
<dbReference type="Araport" id="AT2G25140"/>
<dbReference type="TAIR" id="AT2G25140">
    <property type="gene designation" value="CLPB4"/>
</dbReference>
<dbReference type="eggNOG" id="KOG1051">
    <property type="taxonomic scope" value="Eukaryota"/>
</dbReference>
<dbReference type="HOGENOM" id="CLU_005070_4_2_1"/>
<dbReference type="InParanoid" id="Q8VYJ7"/>
<dbReference type="OMA" id="IDLHYTK"/>
<dbReference type="PhylomeDB" id="Q8VYJ7"/>
<dbReference type="PRO" id="PR:Q8VYJ7"/>
<dbReference type="Proteomes" id="UP000006548">
    <property type="component" value="Chromosome 2"/>
</dbReference>
<dbReference type="ExpressionAtlas" id="Q8VYJ7">
    <property type="expression patterns" value="baseline and differential"/>
</dbReference>
<dbReference type="GO" id="GO:0009507">
    <property type="term" value="C:chloroplast"/>
    <property type="evidence" value="ECO:0007005"/>
    <property type="project" value="TAIR"/>
</dbReference>
<dbReference type="GO" id="GO:0009941">
    <property type="term" value="C:chloroplast envelope"/>
    <property type="evidence" value="ECO:0007005"/>
    <property type="project" value="TAIR"/>
</dbReference>
<dbReference type="GO" id="GO:0009570">
    <property type="term" value="C:chloroplast stroma"/>
    <property type="evidence" value="ECO:0007005"/>
    <property type="project" value="TAIR"/>
</dbReference>
<dbReference type="GO" id="GO:0005739">
    <property type="term" value="C:mitochondrion"/>
    <property type="evidence" value="ECO:0000314"/>
    <property type="project" value="TAIR"/>
</dbReference>
<dbReference type="GO" id="GO:0005524">
    <property type="term" value="F:ATP binding"/>
    <property type="evidence" value="ECO:0007669"/>
    <property type="project" value="UniProtKB-KW"/>
</dbReference>
<dbReference type="GO" id="GO:0016887">
    <property type="term" value="F:ATP hydrolysis activity"/>
    <property type="evidence" value="ECO:0007669"/>
    <property type="project" value="InterPro"/>
</dbReference>
<dbReference type="GO" id="GO:0042026">
    <property type="term" value="P:protein refolding"/>
    <property type="evidence" value="ECO:0007669"/>
    <property type="project" value="InterPro"/>
</dbReference>
<dbReference type="GO" id="GO:0009408">
    <property type="term" value="P:response to heat"/>
    <property type="evidence" value="ECO:0007669"/>
    <property type="project" value="InterPro"/>
</dbReference>
<dbReference type="CDD" id="cd00009">
    <property type="entry name" value="AAA"/>
    <property type="match status" value="1"/>
</dbReference>
<dbReference type="CDD" id="cd19499">
    <property type="entry name" value="RecA-like_ClpB_Hsp104-like"/>
    <property type="match status" value="1"/>
</dbReference>
<dbReference type="FunFam" id="1.10.8.60:FF:000017">
    <property type="entry name" value="ATP-dependent chaperone ClpB"/>
    <property type="match status" value="1"/>
</dbReference>
<dbReference type="FunFam" id="3.40.50.300:FF:000120">
    <property type="entry name" value="ATP-dependent chaperone ClpB"/>
    <property type="match status" value="1"/>
</dbReference>
<dbReference type="FunFam" id="3.40.50.300:FF:000025">
    <property type="entry name" value="ATP-dependent Clp protease subunit"/>
    <property type="match status" value="1"/>
</dbReference>
<dbReference type="FunFam" id="3.40.50.300:FF:000010">
    <property type="entry name" value="Chaperone clpB 1, putative"/>
    <property type="match status" value="1"/>
</dbReference>
<dbReference type="Gene3D" id="1.10.8.60">
    <property type="match status" value="1"/>
</dbReference>
<dbReference type="Gene3D" id="1.10.1780.10">
    <property type="entry name" value="Clp, N-terminal domain"/>
    <property type="match status" value="1"/>
</dbReference>
<dbReference type="Gene3D" id="3.40.50.300">
    <property type="entry name" value="P-loop containing nucleotide triphosphate hydrolases"/>
    <property type="match status" value="3"/>
</dbReference>
<dbReference type="InterPro" id="IPR003593">
    <property type="entry name" value="AAA+_ATPase"/>
</dbReference>
<dbReference type="InterPro" id="IPR003959">
    <property type="entry name" value="ATPase_AAA_core"/>
</dbReference>
<dbReference type="InterPro" id="IPR017730">
    <property type="entry name" value="Chaperonin_ClpB"/>
</dbReference>
<dbReference type="InterPro" id="IPR019489">
    <property type="entry name" value="Clp_ATPase_C"/>
</dbReference>
<dbReference type="InterPro" id="IPR036628">
    <property type="entry name" value="Clp_N_dom_sf"/>
</dbReference>
<dbReference type="InterPro" id="IPR004176">
    <property type="entry name" value="Clp_R_dom"/>
</dbReference>
<dbReference type="InterPro" id="IPR001270">
    <property type="entry name" value="ClpA/B"/>
</dbReference>
<dbReference type="InterPro" id="IPR018368">
    <property type="entry name" value="ClpA/B_CS1"/>
</dbReference>
<dbReference type="InterPro" id="IPR028299">
    <property type="entry name" value="ClpA/B_CS2"/>
</dbReference>
<dbReference type="InterPro" id="IPR041546">
    <property type="entry name" value="ClpA/ClpB_AAA_lid"/>
</dbReference>
<dbReference type="InterPro" id="IPR050130">
    <property type="entry name" value="ClpA_ClpB"/>
</dbReference>
<dbReference type="InterPro" id="IPR027417">
    <property type="entry name" value="P-loop_NTPase"/>
</dbReference>
<dbReference type="NCBIfam" id="TIGR03346">
    <property type="entry name" value="chaperone_ClpB"/>
    <property type="match status" value="1"/>
</dbReference>
<dbReference type="PANTHER" id="PTHR11638">
    <property type="entry name" value="ATP-DEPENDENT CLP PROTEASE"/>
    <property type="match status" value="1"/>
</dbReference>
<dbReference type="PANTHER" id="PTHR11638:SF86">
    <property type="entry name" value="CHAPERONE PROTEIN CLPB4, MITOCHONDRIAL"/>
    <property type="match status" value="1"/>
</dbReference>
<dbReference type="Pfam" id="PF00004">
    <property type="entry name" value="AAA"/>
    <property type="match status" value="1"/>
</dbReference>
<dbReference type="Pfam" id="PF07724">
    <property type="entry name" value="AAA_2"/>
    <property type="match status" value="1"/>
</dbReference>
<dbReference type="Pfam" id="PF17871">
    <property type="entry name" value="AAA_lid_9"/>
    <property type="match status" value="1"/>
</dbReference>
<dbReference type="Pfam" id="PF02861">
    <property type="entry name" value="Clp_N"/>
    <property type="match status" value="2"/>
</dbReference>
<dbReference type="Pfam" id="PF10431">
    <property type="entry name" value="ClpB_D2-small"/>
    <property type="match status" value="1"/>
</dbReference>
<dbReference type="PRINTS" id="PR00300">
    <property type="entry name" value="CLPPROTEASEA"/>
</dbReference>
<dbReference type="SMART" id="SM00382">
    <property type="entry name" value="AAA"/>
    <property type="match status" value="2"/>
</dbReference>
<dbReference type="SMART" id="SM01086">
    <property type="entry name" value="ClpB_D2-small"/>
    <property type="match status" value="1"/>
</dbReference>
<dbReference type="SUPFAM" id="SSF81923">
    <property type="entry name" value="Double Clp-N motif"/>
    <property type="match status" value="1"/>
</dbReference>
<dbReference type="SUPFAM" id="SSF52540">
    <property type="entry name" value="P-loop containing nucleoside triphosphate hydrolases"/>
    <property type="match status" value="2"/>
</dbReference>
<dbReference type="PROSITE" id="PS51903">
    <property type="entry name" value="CLP_R"/>
    <property type="match status" value="1"/>
</dbReference>
<dbReference type="PROSITE" id="PS00870">
    <property type="entry name" value="CLPAB_1"/>
    <property type="match status" value="1"/>
</dbReference>
<dbReference type="PROSITE" id="PS00871">
    <property type="entry name" value="CLPAB_2"/>
    <property type="match status" value="1"/>
</dbReference>
<feature type="transit peptide" description="Mitochondrion" evidence="2">
    <location>
        <begin position="1"/>
        <end position="39"/>
    </location>
</feature>
<feature type="chain" id="PRO_0000412574" description="Chaperone protein ClpB4, mitochondrial">
    <location>
        <begin position="40"/>
        <end position="964"/>
    </location>
</feature>
<feature type="domain" description="Clp R" evidence="3">
    <location>
        <begin position="83"/>
        <end position="227"/>
    </location>
</feature>
<feature type="region of interest" description="Repeat 1" evidence="3">
    <location>
        <begin position="88"/>
        <end position="153"/>
    </location>
</feature>
<feature type="region of interest" description="Repeat 2" evidence="3">
    <location>
        <begin position="164"/>
        <end position="227"/>
    </location>
</feature>
<feature type="region of interest" description="I" evidence="1">
    <location>
        <begin position="242"/>
        <end position="490"/>
    </location>
</feature>
<feature type="region of interest" description="II" evidence="1">
    <location>
        <begin position="616"/>
        <end position="807"/>
    </location>
</feature>
<feature type="binding site" evidence="2">
    <location>
        <begin position="287"/>
        <end position="294"/>
    </location>
    <ligand>
        <name>ATP</name>
        <dbReference type="ChEBI" id="CHEBI:30616"/>
    </ligand>
</feature>
<feature type="binding site" evidence="2">
    <location>
        <begin position="690"/>
        <end position="697"/>
    </location>
    <ligand>
        <name>ATP</name>
        <dbReference type="ChEBI" id="CHEBI:30616"/>
    </ligand>
</feature>
<gene>
    <name type="primary">CLPB4</name>
    <name type="synonym">CLPB-M</name>
    <name type="synonym">HSP98.7</name>
    <name type="ordered locus">At2g25140</name>
    <name type="ORF">F13D4.100</name>
</gene>
<organism>
    <name type="scientific">Arabidopsis thaliana</name>
    <name type="common">Mouse-ear cress</name>
    <dbReference type="NCBI Taxonomy" id="3702"/>
    <lineage>
        <taxon>Eukaryota</taxon>
        <taxon>Viridiplantae</taxon>
        <taxon>Streptophyta</taxon>
        <taxon>Embryophyta</taxon>
        <taxon>Tracheophyta</taxon>
        <taxon>Spermatophyta</taxon>
        <taxon>Magnoliopsida</taxon>
        <taxon>eudicotyledons</taxon>
        <taxon>Gunneridae</taxon>
        <taxon>Pentapetalae</taxon>
        <taxon>rosids</taxon>
        <taxon>malvids</taxon>
        <taxon>Brassicales</taxon>
        <taxon>Brassicaceae</taxon>
        <taxon>Camelineae</taxon>
        <taxon>Arabidopsis</taxon>
    </lineage>
</organism>
<name>CLPB4_ARATH</name>
<protein>
    <recommendedName>
        <fullName>Chaperone protein ClpB4, mitochondrial</fullName>
    </recommendedName>
    <alternativeName>
        <fullName>ATP-dependent Clp protease ATP-binding subunit ClpB homolog 4</fullName>
    </alternativeName>
    <alternativeName>
        <fullName>Casein lytic proteinase B4</fullName>
    </alternativeName>
</protein>